<comment type="function">
    <text evidence="3 5 6 7">V region of the variable domain of T cell receptor (TR) beta chain that participates in the antigen recognition (PubMed:24600447). Alpha-beta T cell receptors are antigen specific receptors which are essential to the immune response and are present on the cell surface of T lymphocytes. Recognize peptide-major histocompatibility (MH) (pMH) complexes that are displayed by antigen presenting cells (APC), a prerequisite for efficient T cell adaptive immunity against pathogens (PubMed:25493333). Binding of alpha-beta TR to pMH complex initiates TR-CD3 clustering on the cell surface and intracellular activation of LCK that phosphorylates the ITAM motifs of CD3G, CD3D, CD3E and CD247 enabling the recruitment of ZAP70. In turn ZAP70 phosphorylates LAT, which recruits numerous signaling molecules to form the LAT signalosome. The LAT signalosome propagates signal branching to three major signaling pathways, the calcium, the mitogen-activated protein kinase (MAPK) kinase and the nuclear factor NF-kappa-B (NF-kB) pathways, leading to the mobilization of transcription factors that are critical for gene expression and essential for T cell growth and differentiation (PubMed:23524462). The T cell repertoire is generated in the thymus, by V-(D)-J rearrangement. This repertoire is then shaped by intrathymic selection events to generate a peripheral T cell pool of self-MH restricted, non-autoaggressive T cells. Post-thymic interaction of alpha-beta TR with the pMH complexes shapes TR structural and functional avidity (PubMed:15040585).</text>
</comment>
<comment type="subunit">
    <text evidence="4">Alpha-beta TR is a heterodimer composed of an alpha and beta chain; disulfide-linked. The alpha-beta TR is associated with the transmembrane signaling CD3 coreceptor proteins to form the TR-CD3 (TcR or TCR). The assembly of alpha-beta TR heterodimers with CD3 occurs in the endoplasmic reticulum where a single alpha-beta TR heterodimer associates with one CD3D-CD3E heterodimer, one CD3G-CD3E heterodimer and one CD247 homodimer forming a stable octameric structure. CD3D-CD3E and CD3G-CD3E heterodimers preferentially associate with TR alpha and TR beta chains, respectively. The association of the CD247 homodimer is the last step of TcR assembly in the endoplasmic reticulum and is required for transport to the cell surface.</text>
</comment>
<comment type="subcellular location">
    <subcellularLocation>
        <location evidence="4">Cell membrane</location>
    </subcellularLocation>
</comment>
<comment type="polymorphism">
    <text evidence="10">There are several alleles. The sequence shown is that of IMGT allele TRBV5-8*01.</text>
</comment>
<feature type="signal peptide" evidence="1">
    <location>
        <begin position="1"/>
        <end position="21"/>
    </location>
</feature>
<feature type="chain" id="PRO_5010819789" description="T cell receptor beta variable 5-8" evidence="1">
    <location>
        <begin position="22"/>
        <end position="114"/>
    </location>
</feature>
<feature type="domain" description="Ig-like" evidence="2">
    <location>
        <begin position="22"/>
        <end position="114" status="greater than"/>
    </location>
</feature>
<feature type="glycosylation site" description="N-linked (GlcNAc...) asparagine" evidence="1">
    <location>
        <position position="90"/>
    </location>
</feature>
<feature type="disulfide bond" evidence="2">
    <location>
        <begin position="42"/>
        <end position="110"/>
    </location>
</feature>
<feature type="non-terminal residue">
    <location>
        <position position="114"/>
    </location>
</feature>
<name>TVB58_HUMAN</name>
<protein>
    <recommendedName>
        <fullName evidence="9">T cell receptor beta variable 5-8</fullName>
    </recommendedName>
</protein>
<sequence length="114" mass="12721">MGPRLLFWALLCLLGTGPVEAGVTQSPTHLIKTRGQQATLRCSPISGHTSVYWYQQALGLGLQFLLWYDEGEERNRGNFPPRFSGRQFPNYSSELNVNALELEDSALYLCASSL</sequence>
<dbReference type="EMBL" id="L36092">
    <property type="protein sequence ID" value="AAC13331.1"/>
    <property type="molecule type" value="Genomic_DNA"/>
</dbReference>
<dbReference type="EMBL" id="AC229888">
    <property type="status" value="NOT_ANNOTATED_CDS"/>
    <property type="molecule type" value="Genomic_DNA"/>
</dbReference>
<dbReference type="SMR" id="A0A5A2"/>
<dbReference type="FunCoup" id="A0A5A2">
    <property type="interactions" value="806"/>
</dbReference>
<dbReference type="IMGT_GENE-DB" id="TRBV5-8"/>
<dbReference type="GlyCosmos" id="A0A5A2">
    <property type="glycosylation" value="1 site, No reported glycans"/>
</dbReference>
<dbReference type="GlyGen" id="A0A5A2">
    <property type="glycosylation" value="1 site"/>
</dbReference>
<dbReference type="BioMuta" id="ENSG00000282054"/>
<dbReference type="MassIVE" id="A0A5A2"/>
<dbReference type="AGR" id="HGNC:12225"/>
<dbReference type="GeneCards" id="TRBV5-8"/>
<dbReference type="HGNC" id="HGNC:12225">
    <property type="gene designation" value="TRBV5-8"/>
</dbReference>
<dbReference type="neXtProt" id="NX_A0A5A2"/>
<dbReference type="InParanoid" id="A0A5A2"/>
<dbReference type="PAN-GO" id="A0A5A2">
    <property type="GO annotations" value="2 GO annotations based on evolutionary models"/>
</dbReference>
<dbReference type="PhylomeDB" id="A0A5A2"/>
<dbReference type="Pharos" id="A0A5A2">
    <property type="development level" value="Tdark"/>
</dbReference>
<dbReference type="PRO" id="PR:A0A5A2"/>
<dbReference type="Proteomes" id="UP000005640">
    <property type="component" value="Unplaced"/>
</dbReference>
<dbReference type="RNAct" id="A0A5A2">
    <property type="molecule type" value="protein"/>
</dbReference>
<dbReference type="GO" id="GO:0005886">
    <property type="term" value="C:plasma membrane"/>
    <property type="evidence" value="ECO:0000318"/>
    <property type="project" value="GO_Central"/>
</dbReference>
<dbReference type="GO" id="GO:0042101">
    <property type="term" value="C:T cell receptor complex"/>
    <property type="evidence" value="ECO:0007669"/>
    <property type="project" value="UniProtKB-KW"/>
</dbReference>
<dbReference type="GO" id="GO:0002250">
    <property type="term" value="P:adaptive immune response"/>
    <property type="evidence" value="ECO:0007669"/>
    <property type="project" value="UniProtKB-KW"/>
</dbReference>
<dbReference type="GO" id="GO:0007166">
    <property type="term" value="P:cell surface receptor signaling pathway"/>
    <property type="evidence" value="ECO:0000318"/>
    <property type="project" value="GO_Central"/>
</dbReference>
<dbReference type="Gene3D" id="2.60.40.10">
    <property type="entry name" value="Immunoglobulins"/>
    <property type="match status" value="1"/>
</dbReference>
<dbReference type="InterPro" id="IPR007110">
    <property type="entry name" value="Ig-like_dom"/>
</dbReference>
<dbReference type="InterPro" id="IPR036179">
    <property type="entry name" value="Ig-like_dom_sf"/>
</dbReference>
<dbReference type="InterPro" id="IPR013783">
    <property type="entry name" value="Ig-like_fold"/>
</dbReference>
<dbReference type="InterPro" id="IPR013106">
    <property type="entry name" value="Ig_V-set"/>
</dbReference>
<dbReference type="InterPro" id="IPR050413">
    <property type="entry name" value="TCR_beta_variable"/>
</dbReference>
<dbReference type="PANTHER" id="PTHR23268:SF123">
    <property type="entry name" value="T CELL RECEPTOR BETA VARIABLE 5-8"/>
    <property type="match status" value="1"/>
</dbReference>
<dbReference type="PANTHER" id="PTHR23268">
    <property type="entry name" value="T-CELL RECEPTOR BETA CHAIN"/>
    <property type="match status" value="1"/>
</dbReference>
<dbReference type="Pfam" id="PF07686">
    <property type="entry name" value="V-set"/>
    <property type="match status" value="1"/>
</dbReference>
<dbReference type="SMART" id="SM00406">
    <property type="entry name" value="IGv"/>
    <property type="match status" value="1"/>
</dbReference>
<dbReference type="SUPFAM" id="SSF48726">
    <property type="entry name" value="Immunoglobulin"/>
    <property type="match status" value="1"/>
</dbReference>
<dbReference type="PROSITE" id="PS50835">
    <property type="entry name" value="IG_LIKE"/>
    <property type="match status" value="1"/>
</dbReference>
<keyword id="KW-1064">Adaptive immunity</keyword>
<keyword id="KW-1003">Cell membrane</keyword>
<keyword id="KW-1015">Disulfide bond</keyword>
<keyword id="KW-0325">Glycoprotein</keyword>
<keyword id="KW-0391">Immunity</keyword>
<keyword id="KW-0393">Immunoglobulin domain</keyword>
<keyword id="KW-0472">Membrane</keyword>
<keyword id="KW-0675">Receptor</keyword>
<keyword id="KW-1185">Reference proteome</keyword>
<keyword id="KW-0732">Signal</keyword>
<keyword id="KW-1279">T cell receptor</keyword>
<reference key="1">
    <citation type="journal article" date="1996" name="Science">
        <title>The complete 685-kilobase DNA sequence of the human beta T cell receptor locus.</title>
        <authorList>
            <person name="Rowen L."/>
            <person name="Koop B.F."/>
            <person name="Hood L."/>
        </authorList>
    </citation>
    <scope>NUCLEOTIDE SEQUENCE [GENOMIC DNA] (IMGT ALLELE TRBV5-8*01)</scope>
</reference>
<reference key="2">
    <citation type="journal article" date="2003" name="Nature">
        <title>The DNA sequence of human chromosome 7.</title>
        <authorList>
            <person name="Hillier L.W."/>
            <person name="Fulton R.S."/>
            <person name="Fulton L.A."/>
            <person name="Graves T.A."/>
            <person name="Pepin K.H."/>
            <person name="Wagner-McPherson C."/>
            <person name="Layman D."/>
            <person name="Maas J."/>
            <person name="Jaeger S."/>
            <person name="Walker R."/>
            <person name="Wylie K."/>
            <person name="Sekhon M."/>
            <person name="Becker M.C."/>
            <person name="O'Laughlin M.D."/>
            <person name="Schaller M.E."/>
            <person name="Fewell G.A."/>
            <person name="Delehaunty K.D."/>
            <person name="Miner T.L."/>
            <person name="Nash W.E."/>
            <person name="Cordes M."/>
            <person name="Du H."/>
            <person name="Sun H."/>
            <person name="Edwards J."/>
            <person name="Bradshaw-Cordum H."/>
            <person name="Ali J."/>
            <person name="Andrews S."/>
            <person name="Isak A."/>
            <person name="Vanbrunt A."/>
            <person name="Nguyen C."/>
            <person name="Du F."/>
            <person name="Lamar B."/>
            <person name="Courtney L."/>
            <person name="Kalicki J."/>
            <person name="Ozersky P."/>
            <person name="Bielicki L."/>
            <person name="Scott K."/>
            <person name="Holmes A."/>
            <person name="Harkins R."/>
            <person name="Harris A."/>
            <person name="Strong C.M."/>
            <person name="Hou S."/>
            <person name="Tomlinson C."/>
            <person name="Dauphin-Kohlberg S."/>
            <person name="Kozlowicz-Reilly A."/>
            <person name="Leonard S."/>
            <person name="Rohlfing T."/>
            <person name="Rock S.M."/>
            <person name="Tin-Wollam A.-M."/>
            <person name="Abbott A."/>
            <person name="Minx P."/>
            <person name="Maupin R."/>
            <person name="Strowmatt C."/>
            <person name="Latreille P."/>
            <person name="Miller N."/>
            <person name="Johnson D."/>
            <person name="Murray J."/>
            <person name="Woessner J.P."/>
            <person name="Wendl M.C."/>
            <person name="Yang S.-P."/>
            <person name="Schultz B.R."/>
            <person name="Wallis J.W."/>
            <person name="Spieth J."/>
            <person name="Bieri T.A."/>
            <person name="Nelson J.O."/>
            <person name="Berkowicz N."/>
            <person name="Wohldmann P.E."/>
            <person name="Cook L.L."/>
            <person name="Hickenbotham M.T."/>
            <person name="Eldred J."/>
            <person name="Williams D."/>
            <person name="Bedell J.A."/>
            <person name="Mardis E.R."/>
            <person name="Clifton S.W."/>
            <person name="Chissoe S.L."/>
            <person name="Marra M.A."/>
            <person name="Raymond C."/>
            <person name="Haugen E."/>
            <person name="Gillett W."/>
            <person name="Zhou Y."/>
            <person name="James R."/>
            <person name="Phelps K."/>
            <person name="Iadanoto S."/>
            <person name="Bubb K."/>
            <person name="Simms E."/>
            <person name="Levy R."/>
            <person name="Clendenning J."/>
            <person name="Kaul R."/>
            <person name="Kent W.J."/>
            <person name="Furey T.S."/>
            <person name="Baertsch R.A."/>
            <person name="Brent M.R."/>
            <person name="Keibler E."/>
            <person name="Flicek P."/>
            <person name="Bork P."/>
            <person name="Suyama M."/>
            <person name="Bailey J.A."/>
            <person name="Portnoy M.E."/>
            <person name="Torrents D."/>
            <person name="Chinwalla A.T."/>
            <person name="Gish W.R."/>
            <person name="Eddy S.R."/>
            <person name="McPherson J.D."/>
            <person name="Olson M.V."/>
            <person name="Eichler E.E."/>
            <person name="Green E.D."/>
            <person name="Waterston R.H."/>
            <person name="Wilson R.K."/>
        </authorList>
    </citation>
    <scope>NUCLEOTIDE SEQUENCE [LARGE SCALE GENOMIC DNA] (IMGT ALLELE TRBV5-8*01)</scope>
</reference>
<reference key="3">
    <citation type="book" date="2001" name="The T Cell Receptor FactsBook.">
        <title>The T Cell Receptor FactsBook.</title>
        <editorList>
            <person name="Lefranc M.P."/>
            <person name="Lefranc G."/>
        </editorList>
        <authorList>
            <person name="Lefranc M.P."/>
            <person name="Lefranc G."/>
        </authorList>
    </citation>
    <scope>NOMENCLATURE</scope>
</reference>
<reference key="4">
    <citation type="journal article" date="2004" name="Nat. Rev. Immunol.">
        <title>The many important facets of T-cell repertoire diversity.</title>
        <authorList>
            <person name="Nikolich-Zugich J."/>
            <person name="Slifka M.K."/>
            <person name="Messaoudi I."/>
        </authorList>
    </citation>
    <scope>REVIEW ON T CELL REPERTOIRE DIVERSITY</scope>
</reference>
<reference key="5">
    <citation type="journal article" date="2010" name="Cold Spring Harb. Perspect. Biol.">
        <title>Structural biology of the T-cell receptor: insights into receptor assembly, ligand recognition, and initiation of signaling.</title>
        <authorList>
            <person name="Wucherpfennig K.W."/>
            <person name="Gagnon E."/>
            <person name="Call M.J."/>
            <person name="Huseby E.S."/>
            <person name="Call M.E."/>
        </authorList>
    </citation>
    <scope>REVIEW ON T CELL RECEPTOR-CD3 COMPLEX ASSEMBLY</scope>
    <scope>SUBCELLULAR LOCATION</scope>
</reference>
<reference key="6">
    <citation type="journal article" date="2013" name="Nat. Rev. Immunol.">
        <title>T cell receptor signalling networks: branched, diversified and bounded.</title>
        <authorList>
            <person name="Brownlie R.J."/>
            <person name="Zamoyska R."/>
        </authorList>
    </citation>
    <scope>REVIEW ON T CELL RECEPTOR SIGNALING</scope>
</reference>
<reference key="7">
    <citation type="journal article" date="2014" name="Front. Immunol.">
        <title>Immunoglobulin and T Cell Receptor Genes: IMGT((R)) and the Birth and Rise of Immunoinformatics.</title>
        <authorList>
            <person name="Lefranc M.P."/>
        </authorList>
    </citation>
    <scope>NOMENCLATURE</scope>
</reference>
<reference key="8">
    <citation type="journal article" date="2015" name="Annu. Rev. Immunol.">
        <title>T cell antigen receptor recognition of antigen-presenting molecules.</title>
        <authorList>
            <person name="Rossjohn J."/>
            <person name="Gras S."/>
            <person name="Miles J.J."/>
            <person name="Turner S.J."/>
            <person name="Godfrey D.I."/>
            <person name="McCluskey J."/>
        </authorList>
    </citation>
    <scope>REVIEW ON FUNCTION</scope>
</reference>
<evidence type="ECO:0000255" key="1"/>
<evidence type="ECO:0000255" key="2">
    <source>
        <dbReference type="PROSITE-ProRule" id="PRU00114"/>
    </source>
</evidence>
<evidence type="ECO:0000303" key="3">
    <source>
    </source>
</evidence>
<evidence type="ECO:0000303" key="4">
    <source>
    </source>
</evidence>
<evidence type="ECO:0000303" key="5">
    <source>
    </source>
</evidence>
<evidence type="ECO:0000303" key="6">
    <source>
    </source>
</evidence>
<evidence type="ECO:0000303" key="7">
    <source>
    </source>
</evidence>
<evidence type="ECO:0000303" key="8">
    <source>
    </source>
</evidence>
<evidence type="ECO:0000303" key="9">
    <source ref="3"/>
</evidence>
<evidence type="ECO:0000305" key="10"/>
<accession>A0A5A2</accession>
<organism>
    <name type="scientific">Homo sapiens</name>
    <name type="common">Human</name>
    <dbReference type="NCBI Taxonomy" id="9606"/>
    <lineage>
        <taxon>Eukaryota</taxon>
        <taxon>Metazoa</taxon>
        <taxon>Chordata</taxon>
        <taxon>Craniata</taxon>
        <taxon>Vertebrata</taxon>
        <taxon>Euteleostomi</taxon>
        <taxon>Mammalia</taxon>
        <taxon>Eutheria</taxon>
        <taxon>Euarchontoglires</taxon>
        <taxon>Primates</taxon>
        <taxon>Haplorrhini</taxon>
        <taxon>Catarrhini</taxon>
        <taxon>Hominidae</taxon>
        <taxon>Homo</taxon>
    </lineage>
</organism>
<proteinExistence type="inferred from homology"/>
<gene>
    <name evidence="9" type="primary">TRBV5-8</name>
    <name evidence="8" type="synonym">TCRBV5S4A2T</name>
</gene>